<evidence type="ECO:0000250" key="1">
    <source>
        <dbReference type="UniProtKB" id="O35956"/>
    </source>
</evidence>
<evidence type="ECO:0000250" key="2">
    <source>
        <dbReference type="UniProtKB" id="Q4U2R8"/>
    </source>
</evidence>
<evidence type="ECO:0000250" key="3">
    <source>
        <dbReference type="UniProtKB" id="Q8VC69"/>
    </source>
</evidence>
<evidence type="ECO:0000255" key="4"/>
<evidence type="ECO:0000256" key="5">
    <source>
        <dbReference type="SAM" id="MobiDB-lite"/>
    </source>
</evidence>
<evidence type="ECO:0000269" key="6">
    <source>
    </source>
</evidence>
<evidence type="ECO:0000303" key="7">
    <source>
    </source>
</evidence>
<evidence type="ECO:0000305" key="8"/>
<dbReference type="EMBL" id="AB182992">
    <property type="protein sequence ID" value="BAD99107.1"/>
    <property type="molecule type" value="mRNA"/>
</dbReference>
<dbReference type="RefSeq" id="NP_001274626.1">
    <property type="nucleotide sequence ID" value="NM_001287697.1"/>
</dbReference>
<dbReference type="SMR" id="Q4W8A3"/>
<dbReference type="STRING" id="9541.ENSMFAP00000033995"/>
<dbReference type="GlyCosmos" id="Q4W8A3">
    <property type="glycosylation" value="3 sites, No reported glycans"/>
</dbReference>
<dbReference type="Ensembl" id="ENSMFAT00000008223.2">
    <property type="protein sequence ID" value="ENSMFAP00000033995.1"/>
    <property type="gene ID" value="ENSMFAG00000003484.2"/>
</dbReference>
<dbReference type="VEuPathDB" id="HostDB:ENSMFAG00000003484"/>
<dbReference type="eggNOG" id="KOG0255">
    <property type="taxonomic scope" value="Eukaryota"/>
</dbReference>
<dbReference type="GeneTree" id="ENSGT00940000157004"/>
<dbReference type="OMA" id="WHCTGAS"/>
<dbReference type="Proteomes" id="UP000233100">
    <property type="component" value="Chromosome 14"/>
</dbReference>
<dbReference type="Bgee" id="ENSMFAG00000003484">
    <property type="expression patterns" value="Expressed in adult mammalian kidney and 3 other cell types or tissues"/>
</dbReference>
<dbReference type="GO" id="GO:0009925">
    <property type="term" value="C:basal plasma membrane"/>
    <property type="evidence" value="ECO:0000250"/>
    <property type="project" value="UniProtKB"/>
</dbReference>
<dbReference type="GO" id="GO:0016323">
    <property type="term" value="C:basolateral plasma membrane"/>
    <property type="evidence" value="ECO:0000314"/>
    <property type="project" value="UniProtKB"/>
</dbReference>
<dbReference type="GO" id="GO:0005886">
    <property type="term" value="C:plasma membrane"/>
    <property type="evidence" value="ECO:0000250"/>
    <property type="project" value="UniProtKB"/>
</dbReference>
<dbReference type="GO" id="GO:0015139">
    <property type="term" value="F:alpha-ketoglutarate transmembrane transporter activity"/>
    <property type="evidence" value="ECO:0000250"/>
    <property type="project" value="UniProtKB"/>
</dbReference>
<dbReference type="GO" id="GO:0015297">
    <property type="term" value="F:antiporter activity"/>
    <property type="evidence" value="ECO:0000314"/>
    <property type="project" value="UniProtKB"/>
</dbReference>
<dbReference type="GO" id="GO:0008514">
    <property type="term" value="F:organic anion transmembrane transporter activity"/>
    <property type="evidence" value="ECO:0000314"/>
    <property type="project" value="UniProtKB"/>
</dbReference>
<dbReference type="GO" id="GO:0015132">
    <property type="term" value="F:prostaglandin transmembrane transporter activity"/>
    <property type="evidence" value="ECO:0000250"/>
    <property type="project" value="UniProtKB"/>
</dbReference>
<dbReference type="GO" id="GO:0015347">
    <property type="term" value="F:sodium-independent organic anion transmembrane transporter activity"/>
    <property type="evidence" value="ECO:0000314"/>
    <property type="project" value="UniProtKB"/>
</dbReference>
<dbReference type="GO" id="GO:0005452">
    <property type="term" value="F:solute:inorganic anion antiporter activity"/>
    <property type="evidence" value="ECO:0000250"/>
    <property type="project" value="UniProtKB"/>
</dbReference>
<dbReference type="GO" id="GO:0042910">
    <property type="term" value="F:xenobiotic transmembrane transporter activity"/>
    <property type="evidence" value="ECO:0000250"/>
    <property type="project" value="UniProtKB"/>
</dbReference>
<dbReference type="GO" id="GO:0015742">
    <property type="term" value="P:alpha-ketoglutarate transport"/>
    <property type="evidence" value="ECO:0000250"/>
    <property type="project" value="UniProtKB"/>
</dbReference>
<dbReference type="GO" id="GO:0006820">
    <property type="term" value="P:monoatomic anion transport"/>
    <property type="evidence" value="ECO:0007669"/>
    <property type="project" value="Ensembl"/>
</dbReference>
<dbReference type="GO" id="GO:0015711">
    <property type="term" value="P:organic anion transport"/>
    <property type="evidence" value="ECO:0000250"/>
    <property type="project" value="UniProtKB"/>
</dbReference>
<dbReference type="GO" id="GO:0015732">
    <property type="term" value="P:prostaglandin transport"/>
    <property type="evidence" value="ECO:0000250"/>
    <property type="project" value="UniProtKB"/>
</dbReference>
<dbReference type="GO" id="GO:0097254">
    <property type="term" value="P:renal tubular secretion"/>
    <property type="evidence" value="ECO:0000250"/>
    <property type="project" value="UniProtKB"/>
</dbReference>
<dbReference type="CDD" id="cd17446">
    <property type="entry name" value="MFS_SLC22A6_OAT1_like"/>
    <property type="match status" value="1"/>
</dbReference>
<dbReference type="FunFam" id="1.20.1250.20:FF:000023">
    <property type="entry name" value="Solute carrier family 22 member 6"/>
    <property type="match status" value="1"/>
</dbReference>
<dbReference type="Gene3D" id="1.20.1250.20">
    <property type="entry name" value="MFS general substrate transporter like domains"/>
    <property type="match status" value="1"/>
</dbReference>
<dbReference type="InterPro" id="IPR020846">
    <property type="entry name" value="MFS_dom"/>
</dbReference>
<dbReference type="InterPro" id="IPR005828">
    <property type="entry name" value="MFS_sugar_transport-like"/>
</dbReference>
<dbReference type="InterPro" id="IPR036259">
    <property type="entry name" value="MFS_trans_sf"/>
</dbReference>
<dbReference type="InterPro" id="IPR004749">
    <property type="entry name" value="Orgcat_transp/SVOP"/>
</dbReference>
<dbReference type="NCBIfam" id="TIGR00898">
    <property type="entry name" value="2A0119"/>
    <property type="match status" value="1"/>
</dbReference>
<dbReference type="PANTHER" id="PTHR24064">
    <property type="entry name" value="SOLUTE CARRIER FAMILY 22 MEMBER"/>
    <property type="match status" value="1"/>
</dbReference>
<dbReference type="Pfam" id="PF00083">
    <property type="entry name" value="Sugar_tr"/>
    <property type="match status" value="1"/>
</dbReference>
<dbReference type="SUPFAM" id="SSF103473">
    <property type="entry name" value="MFS general substrate transporter"/>
    <property type="match status" value="1"/>
</dbReference>
<dbReference type="PROSITE" id="PS50850">
    <property type="entry name" value="MFS"/>
    <property type="match status" value="1"/>
</dbReference>
<comment type="function">
    <text evidence="1 2 6">Secondary active transporter that functions as a Na(+)-independent organic anion (OA)/dicarboxylate antiporter where the uptake of one molecule of OA into the cell is coupled with an efflux of one molecule of intracellular dicarboxylate such as 2-oxoglutarate or glutarate (PubMed:15846473). Mediates the uptake of OA across the basolateral side of proximal tubule epithelial cells, thereby contributing to the renal elimination of endogenous OA from the systemic circulation into the urine (By similarity). Functions as a biopterin transporters involved in the uptake and the secretion of coenzymes tetrahydrobiopterin (BH4), dihydrobiopterin (BH2) and sepiapterin to urine, thereby determining baseline levels of blood biopterins (By similarity). Transports prostaglandin E2 (PGE2) and prostaglandin F2-alpha (PGF2-alpha) and may contribute to their renal excretion (By similarity). Also mediates the uptake of cyclic nucleotides such as cAMP and cGMP (By similarity). Involved in the transport of neuroactive tryptophan metabolites kynurenate (KYNA) and xanthurenate (XA) and may contribute to their secretion from the brain (By similarity). May transport glutamate (By similarity). Also involved in the disposition of uremic toxins and potentially toxic xenobiotics by the renal organic anion secretory pathway, helping reduce their undesired toxicological effects on the body (PubMed:15846473). Uremic toxins include the indoxyl sulfate (IS), hippurate/N-benzoylglycine (HA), indole acetate (IA), 3-carboxy-4- methyl-5-propyl-2-furanpropionate (CMPF) and urate (PubMed:15846473). Xenobiotics include the mycotoxin ochratoxin (OTA) (By similarity). May also contribute to the transport of organic compounds in testes across the blood-testis-barrier (By similarity).</text>
</comment>
<comment type="catalytic activity">
    <reaction evidence="2">
        <text>(6R)-L-erythro-5,6,7,8-tetrahydrobiopterin(out) + a dicarboxylate(in) = (6R)-L-erythro-5,6,7,8-tetrahydrobiopterin(in) + a dicarboxylate(out)</text>
        <dbReference type="Rhea" id="RHEA:76071"/>
        <dbReference type="ChEBI" id="CHEBI:28965"/>
        <dbReference type="ChEBI" id="CHEBI:59560"/>
    </reaction>
</comment>
<comment type="catalytic activity">
    <reaction evidence="2">
        <text>L-erythro-7,8-dihydrobiopterin(out) + a dicarboxylate(in) = L-erythro-7,8-dihydrobiopterin(in) + a dicarboxylate(out)</text>
        <dbReference type="Rhea" id="RHEA:76075"/>
        <dbReference type="ChEBI" id="CHEBI:28965"/>
        <dbReference type="ChEBI" id="CHEBI:43029"/>
    </reaction>
</comment>
<comment type="catalytic activity">
    <reaction evidence="2">
        <text>L-sepiapterin(out) + a dicarboxylate(in) = L-sepiapterin(in) + a dicarboxylate(out)</text>
        <dbReference type="Rhea" id="RHEA:76079"/>
        <dbReference type="ChEBI" id="CHEBI:28965"/>
        <dbReference type="ChEBI" id="CHEBI:194527"/>
    </reaction>
</comment>
<comment type="catalytic activity">
    <reaction evidence="2">
        <text>prostaglandin F2alpha(out) + a dicarboxylate(in) = prostaglandin F2alpha(in) + a dicarboxylate(out)</text>
        <dbReference type="Rhea" id="RHEA:76119"/>
        <dbReference type="ChEBI" id="CHEBI:28965"/>
        <dbReference type="ChEBI" id="CHEBI:57404"/>
    </reaction>
</comment>
<comment type="catalytic activity">
    <reaction evidence="2">
        <text>prostaglandin E2(out) + a dicarboxylate(in) = prostaglandin E2(in) + a dicarboxylate(out)</text>
        <dbReference type="Rhea" id="RHEA:76123"/>
        <dbReference type="ChEBI" id="CHEBI:28965"/>
        <dbReference type="ChEBI" id="CHEBI:606564"/>
    </reaction>
</comment>
<comment type="catalytic activity">
    <reaction evidence="1">
        <text>3',5'-cyclic AMP(out) + a dicarboxylate(in) = 3',5'-cyclic AMP(in) + a dicarboxylate(out)</text>
        <dbReference type="Rhea" id="RHEA:76127"/>
        <dbReference type="ChEBI" id="CHEBI:28965"/>
        <dbReference type="ChEBI" id="CHEBI:58165"/>
    </reaction>
</comment>
<comment type="catalytic activity">
    <reaction evidence="1">
        <text>3',5'-cyclic GMP(out) + a dicarboxylate(in) = 3',5'-cyclic GMP(in) + a dicarboxylate(out)</text>
        <dbReference type="Rhea" id="RHEA:76131"/>
        <dbReference type="ChEBI" id="CHEBI:28965"/>
        <dbReference type="ChEBI" id="CHEBI:57746"/>
    </reaction>
</comment>
<comment type="catalytic activity">
    <reaction evidence="1">
        <text>urate(out) + a dicarboxylate(in) = urate(in) + a dicarboxylate(out)</text>
        <dbReference type="Rhea" id="RHEA:76135"/>
        <dbReference type="ChEBI" id="CHEBI:17775"/>
        <dbReference type="ChEBI" id="CHEBI:28965"/>
    </reaction>
</comment>
<comment type="catalytic activity">
    <reaction evidence="2">
        <text>kynurenate(out) + glutarate(in) = kynurenate(in) + glutarate(out)</text>
        <dbReference type="Rhea" id="RHEA:75999"/>
        <dbReference type="ChEBI" id="CHEBI:30921"/>
        <dbReference type="ChEBI" id="CHEBI:58454"/>
    </reaction>
</comment>
<comment type="catalytic activity">
    <reaction evidence="6">
        <text>(indol-3-yl)acetate(out) + a dicarboxylate(in) = (indol-3-yl)acetate(in) + a dicarboxylate(out)</text>
        <dbReference type="Rhea" id="RHEA:75983"/>
        <dbReference type="ChEBI" id="CHEBI:28965"/>
        <dbReference type="ChEBI" id="CHEBI:30854"/>
    </reaction>
</comment>
<comment type="catalytic activity">
    <reaction evidence="6">
        <text>indoxyl sulfate(out) + a dicarboxylate(in) = indoxyl sulfate(in) + a dicarboxylate(out)</text>
        <dbReference type="Rhea" id="RHEA:75987"/>
        <dbReference type="ChEBI" id="CHEBI:28965"/>
        <dbReference type="ChEBI" id="CHEBI:144643"/>
    </reaction>
</comment>
<comment type="catalytic activity">
    <reaction evidence="6">
        <text>N-benzoylglycine(out) + a dicarboxylate(in) = N-benzoylglycine(in) + a dicarboxylate(out)</text>
        <dbReference type="Rhea" id="RHEA:75991"/>
        <dbReference type="ChEBI" id="CHEBI:28965"/>
        <dbReference type="ChEBI" id="CHEBI:606565"/>
    </reaction>
</comment>
<comment type="catalytic activity">
    <reaction evidence="6">
        <text>3-carboxy-4-methyl-5-propyl-2-furanpropanoate(out) + a dicarboxylate(in) = 3-carboxy-4-methyl-5-propyl-2-furanpropanoate(in) + a dicarboxylate(out)</text>
        <dbReference type="Rhea" id="RHEA:75995"/>
        <dbReference type="ChEBI" id="CHEBI:28965"/>
        <dbReference type="ChEBI" id="CHEBI:194524"/>
    </reaction>
</comment>
<comment type="biophysicochemical properties">
    <kinetics>
        <KM evidence="6">12.2 uM for hippurate</KM>
        <KM evidence="6">23.6 uM for indole acetate</KM>
        <KM evidence="6">32.9 uM for indoxyl sulfate</KM>
        <KM evidence="6">85.3 uM for 3-carboxy-4- methyl-5-propyl-2-furanpropionate</KM>
        <Vmax evidence="6">702.0 pmol/min/mg enzyme for hippurate uptake</Vmax>
        <Vmax evidence="6">150.0 pmol/min/mg enzyme for indole acetate uptake</Vmax>
        <Vmax evidence="6">270.0 pmol/min/mg enzyme for indoxyl sulfate uptake</Vmax>
        <Vmax evidence="6">478.0 pmol/min/mg enzyme for 3-carboxy-4- methyl-5-propyl-2-furanpropionate uptake</Vmax>
    </kinetics>
</comment>
<comment type="subcellular location">
    <subcellularLocation>
        <location evidence="6">Basolateral cell membrane</location>
        <topology evidence="8">Multi-pass membrane protein</topology>
    </subcellularLocation>
    <subcellularLocation>
        <location evidence="2">Basal cell membrane</location>
        <topology evidence="8">Multi-pass membrane protein</topology>
    </subcellularLocation>
    <text evidence="6">Expressed at the basolateral membrane of the proximal tubule.</text>
</comment>
<comment type="tissue specificity">
    <text evidence="6">Expressed in kidney; in the basolateral membrane of the proximal tubule.</text>
</comment>
<comment type="domain">
    <text evidence="3">Multiple cysteine residues are necessary for proper targeting to the plasma membrane.</text>
</comment>
<comment type="PTM">
    <text evidence="2">Glycosylated. Glycosylation is necessary for proper targeting of the transporter to the plasma membrane.</text>
</comment>
<comment type="miscellaneous">
    <text evidence="2 6">Involved in the renal transport of a variety of drugs with well-known nephrotoxic potential, therefore may play a role in the etiology of the drug-associated nephrotoxicity (By similarity). Uptakes the diagnostic agent PAH/para-aminohippurate and clinically used drugs (PubMed:15846473). Mediates the bidirectional transport of PAH/para-aminohippurate (By similarity).</text>
</comment>
<comment type="similarity">
    <text evidence="8">Belongs to the major facilitator (TC 2.A.1) superfamily. Organic cation transporter (TC 2.A.1.19) family.</text>
</comment>
<accession>Q4W8A3</accession>
<reference key="1">
    <citation type="journal article" date="2005" name="Pharm. Res.">
        <title>Molecular cloning and functional analyses of OAT1 and OAT3 from cynomolgus monkey kidney.</title>
        <authorList>
            <person name="Tahara H."/>
            <person name="Shono M."/>
            <person name="Kusuhara H."/>
            <person name="Kinoshita H."/>
            <person name="Fuse E."/>
            <person name="Takadate A."/>
            <person name="Otagiri M."/>
            <person name="Sugiyama Y."/>
        </authorList>
    </citation>
    <scope>NUCLEOTIDE SEQUENCE [MRNA]</scope>
    <scope>FUNCTION</scope>
    <scope>TRANSPORTER ACTIVITY</scope>
    <scope>BIOPHYSICOCHEMICAL PROPERTIES</scope>
    <scope>SUBCELLULAR LOCATION</scope>
    <scope>TISSUE SPECIFICITY</scope>
    <scope>MISCELLANEOUS</scope>
    <source>
        <tissue>Kidney</tissue>
    </source>
</reference>
<name>S22A6_MACFA</name>
<protein>
    <recommendedName>
        <fullName>Solute carrier family 22 member 6</fullName>
    </recommendedName>
    <alternativeName>
        <fullName evidence="7">Organic anion transporter 1</fullName>
        <shortName evidence="7">mkOAT1</shortName>
    </alternativeName>
    <alternativeName>
        <fullName evidence="2">Renal organic anion transporter 1</fullName>
    </alternativeName>
</protein>
<sequence length="550" mass="60192">MAFNDLLQQVGGVGRFQQIQVTLVVLPLLLMASHNTVQNFTAAIPTHHCRPPANANLSKDGGLEAWLPRDRQGQPESCLRFTSPQWGPPFPNGTEANGTGATEPCTDGWIYDNSTFPSTIVTEWDLVCSHRALRQLAQSLYMVGVLLGAMVFGYLADRLGRRKVLILNYLQTAVSGTCAAFAPNFPIYCAFRLLSGMSLAGIALNCMTLNVEWMPIHTRACVGTLIGYVYSLGQFLLAGVAYAVPHWRHLQLLISVPFFAFFIYSWFFIESARWHSSSGRLDLTLRALQRVARINGKREEGAKLSMEVLRASLQKELTMGKGQASAMELLRCPTLRHLFLCLSMLWFATSFAYYGLVMDLQGFGVSIYLIQVIFGAVDLPAKLVGFLVINSLGRRPAQMAALLLAGICILLNGVVPQDQSVIRTSLAVLGKGCLAASFNCIFLYTGELYPTMIRQTGLGMGSTMARVGSIVSPLVSMTTELYPSVPLFIYGAVPVAASAVTVLLPETLGQPLPDTVQDLESRKGKQTPQQQEHQKYMVPLQASAQEKNGL</sequence>
<feature type="chain" id="PRO_0000324167" description="Solute carrier family 22 member 6">
    <location>
        <begin position="1"/>
        <end position="550"/>
    </location>
</feature>
<feature type="topological domain" description="Cytoplasmic" evidence="4">
    <location>
        <begin position="1"/>
        <end position="9"/>
    </location>
</feature>
<feature type="transmembrane region" description="Helical" evidence="4">
    <location>
        <begin position="10"/>
        <end position="30"/>
    </location>
</feature>
<feature type="topological domain" description="Extracellular" evidence="4">
    <location>
        <begin position="31"/>
        <end position="135"/>
    </location>
</feature>
<feature type="transmembrane region" description="Helical" evidence="4">
    <location>
        <begin position="136"/>
        <end position="156"/>
    </location>
</feature>
<feature type="topological domain" description="Cytoplasmic" evidence="4">
    <location>
        <begin position="157"/>
        <end position="164"/>
    </location>
</feature>
<feature type="transmembrane region" description="Helical" evidence="4">
    <location>
        <begin position="165"/>
        <end position="187"/>
    </location>
</feature>
<feature type="topological domain" description="Extracellular" evidence="4">
    <location>
        <begin position="188"/>
        <end position="190"/>
    </location>
</feature>
<feature type="transmembrane region" description="Helical" evidence="4">
    <location>
        <begin position="191"/>
        <end position="213"/>
    </location>
</feature>
<feature type="topological domain" description="Cytoplasmic" evidence="4">
    <location>
        <begin position="214"/>
        <end position="224"/>
    </location>
</feature>
<feature type="transmembrane region" description="Helical" evidence="4">
    <location>
        <begin position="225"/>
        <end position="245"/>
    </location>
</feature>
<feature type="topological domain" description="Extracellular" evidence="4">
    <location>
        <begin position="246"/>
        <end position="248"/>
    </location>
</feature>
<feature type="transmembrane region" description="Helical" evidence="4">
    <location>
        <begin position="249"/>
        <end position="269"/>
    </location>
</feature>
<feature type="topological domain" description="Cytoplasmic" evidence="4">
    <location>
        <begin position="270"/>
        <end position="337"/>
    </location>
</feature>
<feature type="transmembrane region" description="Helical" evidence="4">
    <location>
        <begin position="338"/>
        <end position="358"/>
    </location>
</feature>
<feature type="topological domain" description="Extracellular" evidence="4">
    <location>
        <begin position="359"/>
        <end position="368"/>
    </location>
</feature>
<feature type="transmembrane region" description="Helical" evidence="4">
    <location>
        <begin position="369"/>
        <end position="389"/>
    </location>
</feature>
<feature type="topological domain" description="Cytoplasmic" evidence="4">
    <location>
        <begin position="390"/>
        <end position="395"/>
    </location>
</feature>
<feature type="transmembrane region" description="Helical" evidence="4">
    <location>
        <begin position="396"/>
        <end position="416"/>
    </location>
</feature>
<feature type="topological domain" description="Extracellular" evidence="4">
    <location>
        <begin position="417"/>
        <end position="425"/>
    </location>
</feature>
<feature type="transmembrane region" description="Helical" evidence="4">
    <location>
        <begin position="426"/>
        <end position="446"/>
    </location>
</feature>
<feature type="topological domain" description="Cytoplasmic" evidence="4">
    <location>
        <begin position="447"/>
        <end position="456"/>
    </location>
</feature>
<feature type="transmembrane region" description="Helical" evidence="4">
    <location>
        <begin position="457"/>
        <end position="477"/>
    </location>
</feature>
<feature type="topological domain" description="Extracellular" evidence="4">
    <location>
        <begin position="478"/>
        <end position="484"/>
    </location>
</feature>
<feature type="transmembrane region" description="Helical" evidence="4">
    <location>
        <begin position="485"/>
        <end position="505"/>
    </location>
</feature>
<feature type="topological domain" description="Cytoplasmic" evidence="4">
    <location>
        <begin position="506"/>
        <end position="550"/>
    </location>
</feature>
<feature type="region of interest" description="Disordered" evidence="5">
    <location>
        <begin position="513"/>
        <end position="550"/>
    </location>
</feature>
<feature type="glycosylation site" description="N-linked (GlcNAc...) asparagine" evidence="4">
    <location>
        <position position="56"/>
    </location>
</feature>
<feature type="glycosylation site" description="N-linked (GlcNAc...) asparagine" evidence="4">
    <location>
        <position position="92"/>
    </location>
</feature>
<feature type="glycosylation site" description="N-linked (GlcNAc...) asparagine" evidence="4">
    <location>
        <position position="113"/>
    </location>
</feature>
<proteinExistence type="evidence at protein level"/>
<gene>
    <name evidence="2" type="primary">SLC22A6</name>
    <name type="synonym">OAT1</name>
</gene>
<organism>
    <name type="scientific">Macaca fascicularis</name>
    <name type="common">Crab-eating macaque</name>
    <name type="synonym">Cynomolgus monkey</name>
    <dbReference type="NCBI Taxonomy" id="9541"/>
    <lineage>
        <taxon>Eukaryota</taxon>
        <taxon>Metazoa</taxon>
        <taxon>Chordata</taxon>
        <taxon>Craniata</taxon>
        <taxon>Vertebrata</taxon>
        <taxon>Euteleostomi</taxon>
        <taxon>Mammalia</taxon>
        <taxon>Eutheria</taxon>
        <taxon>Euarchontoglires</taxon>
        <taxon>Primates</taxon>
        <taxon>Haplorrhini</taxon>
        <taxon>Catarrhini</taxon>
        <taxon>Cercopithecidae</taxon>
        <taxon>Cercopithecinae</taxon>
        <taxon>Macaca</taxon>
    </lineage>
</organism>
<keyword id="KW-1003">Cell membrane</keyword>
<keyword id="KW-0325">Glycoprotein</keyword>
<keyword id="KW-0472">Membrane</keyword>
<keyword id="KW-1185">Reference proteome</keyword>
<keyword id="KW-0812">Transmembrane</keyword>
<keyword id="KW-1133">Transmembrane helix</keyword>